<keyword id="KW-1003">Cell membrane</keyword>
<keyword id="KW-1015">Disulfide bond</keyword>
<keyword id="KW-0297">G-protein coupled receptor</keyword>
<keyword id="KW-0449">Lipoprotein</keyword>
<keyword id="KW-0472">Membrane</keyword>
<keyword id="KW-0564">Palmitate</keyword>
<keyword id="KW-0675">Receptor</keyword>
<keyword id="KW-1185">Reference proteome</keyword>
<keyword id="KW-0807">Transducer</keyword>
<keyword id="KW-0812">Transmembrane</keyword>
<keyword id="KW-1133">Transmembrane helix</keyword>
<proteinExistence type="inferred from homology"/>
<comment type="function">
    <text>Alpha-2 adrenergic receptors mediate the catecholamine-induced inhibition of adenylate cyclase through the action of G proteins.</text>
</comment>
<comment type="subunit">
    <text evidence="2">Interacts with RAB26. Interacts with PPP1R9B. Interacts with GGA1, GGA2 and GGA3.</text>
</comment>
<comment type="subcellular location">
    <subcellularLocation>
        <location evidence="2">Cell membrane</location>
        <topology evidence="2">Multi-pass membrane protein</topology>
    </subcellularLocation>
    <text evidence="2">Interaction with RAB26, GGA1, GGA2 and GGA3 mediates transport from the Golgi to the cell membrane.</text>
</comment>
<comment type="similarity">
    <text evidence="3">Belongs to the G-protein coupled receptor 1 family. Adrenergic receptor subfamily. ADRA2B sub-subfamily.</text>
</comment>
<gene>
    <name type="primary">ADRA2B</name>
</gene>
<name>ADA2B_ERIEU</name>
<accession>O19012</accession>
<reference key="1">
    <citation type="journal article" date="1997" name="Nature">
        <title>Endemic African mammals shake the phylogenetic tree.</title>
        <authorList>
            <person name="Springer M.S."/>
            <person name="Cleven G.C."/>
            <person name="Madsen O.J."/>
            <person name="de Jong W.W."/>
            <person name="Waddell V.G."/>
            <person name="Amrine H.M."/>
            <person name="Stanhope M.J."/>
        </authorList>
    </citation>
    <scope>NUCLEOTIDE SEQUENCE [GENOMIC DNA]</scope>
</reference>
<dbReference type="EMBL" id="Y12521">
    <property type="protein sequence ID" value="CAA73121.1"/>
    <property type="molecule type" value="Genomic_DNA"/>
</dbReference>
<dbReference type="SMR" id="O19012"/>
<dbReference type="FunCoup" id="O19012">
    <property type="interactions" value="275"/>
</dbReference>
<dbReference type="eggNOG" id="KOG3656">
    <property type="taxonomic scope" value="Eukaryota"/>
</dbReference>
<dbReference type="InParanoid" id="O19012"/>
<dbReference type="Proteomes" id="UP000079721">
    <property type="component" value="Unplaced"/>
</dbReference>
<dbReference type="GO" id="GO:0009986">
    <property type="term" value="C:cell surface"/>
    <property type="evidence" value="ECO:0000250"/>
    <property type="project" value="UniProtKB"/>
</dbReference>
<dbReference type="GO" id="GO:0005886">
    <property type="term" value="C:plasma membrane"/>
    <property type="evidence" value="ECO:0007669"/>
    <property type="project" value="UniProtKB-SubCell"/>
</dbReference>
<dbReference type="GO" id="GO:0004938">
    <property type="term" value="F:alpha2-adrenergic receptor activity"/>
    <property type="evidence" value="ECO:0007669"/>
    <property type="project" value="InterPro"/>
</dbReference>
<dbReference type="GO" id="GO:0051379">
    <property type="term" value="F:epinephrine binding"/>
    <property type="evidence" value="ECO:0007669"/>
    <property type="project" value="TreeGrafter"/>
</dbReference>
<dbReference type="GO" id="GO:0030168">
    <property type="term" value="P:platelet activation"/>
    <property type="evidence" value="ECO:0007669"/>
    <property type="project" value="InterPro"/>
</dbReference>
<dbReference type="GO" id="GO:0006940">
    <property type="term" value="P:regulation of smooth muscle contraction"/>
    <property type="evidence" value="ECO:0007669"/>
    <property type="project" value="InterPro"/>
</dbReference>
<dbReference type="GO" id="GO:0019229">
    <property type="term" value="P:regulation of vasoconstriction"/>
    <property type="evidence" value="ECO:0007669"/>
    <property type="project" value="InterPro"/>
</dbReference>
<dbReference type="CDD" id="cd15321">
    <property type="entry name" value="7tmA_alpha2B_AR"/>
    <property type="match status" value="1"/>
</dbReference>
<dbReference type="FunFam" id="1.20.1070.10:FF:000330">
    <property type="entry name" value="Alpha 2B adrenergic receptor"/>
    <property type="match status" value="1"/>
</dbReference>
<dbReference type="FunFam" id="1.20.1070.10:FF:000185">
    <property type="entry name" value="Alpha-2B adrenergic receptor"/>
    <property type="match status" value="1"/>
</dbReference>
<dbReference type="Gene3D" id="1.20.1070.10">
    <property type="entry name" value="Rhodopsin 7-helix transmembrane proteins"/>
    <property type="match status" value="1"/>
</dbReference>
<dbReference type="InterPro" id="IPR002233">
    <property type="entry name" value="ADR_fam"/>
</dbReference>
<dbReference type="InterPro" id="IPR000207">
    <property type="entry name" value="ADRA2B_rcpt"/>
</dbReference>
<dbReference type="InterPro" id="IPR000276">
    <property type="entry name" value="GPCR_Rhodpsn"/>
</dbReference>
<dbReference type="InterPro" id="IPR017452">
    <property type="entry name" value="GPCR_Rhodpsn_7TM"/>
</dbReference>
<dbReference type="PANTHER" id="PTHR24248">
    <property type="entry name" value="ADRENERGIC RECEPTOR-RELATED G-PROTEIN COUPLED RECEPTOR"/>
    <property type="match status" value="1"/>
</dbReference>
<dbReference type="PANTHER" id="PTHR24248:SF130">
    <property type="entry name" value="ALPHA-2B ADRENERGIC RECEPTOR"/>
    <property type="match status" value="1"/>
</dbReference>
<dbReference type="Pfam" id="PF00001">
    <property type="entry name" value="7tm_1"/>
    <property type="match status" value="1"/>
</dbReference>
<dbReference type="PRINTS" id="PR01103">
    <property type="entry name" value="ADRENERGICR"/>
</dbReference>
<dbReference type="PRINTS" id="PR00559">
    <property type="entry name" value="ADRENRGCA2BR"/>
</dbReference>
<dbReference type="PRINTS" id="PR00237">
    <property type="entry name" value="GPCRRHODOPSN"/>
</dbReference>
<dbReference type="SUPFAM" id="SSF81321">
    <property type="entry name" value="Family A G protein-coupled receptor-like"/>
    <property type="match status" value="1"/>
</dbReference>
<dbReference type="PROSITE" id="PS00237">
    <property type="entry name" value="G_PROTEIN_RECEP_F1_1"/>
    <property type="match status" value="1"/>
</dbReference>
<dbReference type="PROSITE" id="PS50262">
    <property type="entry name" value="G_PROTEIN_RECEP_F1_2"/>
    <property type="match status" value="1"/>
</dbReference>
<evidence type="ECO:0000250" key="1"/>
<evidence type="ECO:0000250" key="2">
    <source>
        <dbReference type="UniProtKB" id="P18089"/>
    </source>
</evidence>
<evidence type="ECO:0000255" key="3">
    <source>
        <dbReference type="PROSITE-ProRule" id="PRU00521"/>
    </source>
</evidence>
<evidence type="ECO:0000256" key="4">
    <source>
        <dbReference type="SAM" id="MobiDB-lite"/>
    </source>
</evidence>
<protein>
    <recommendedName>
        <fullName>Alpha-2B adrenergic receptor</fullName>
    </recommendedName>
    <alternativeName>
        <fullName>Alpha-2B adrenoreceptor</fullName>
        <shortName>Alpha-2B adrenoceptor</shortName>
        <shortName>Alpha-2BAR</shortName>
    </alternativeName>
</protein>
<feature type="chain" id="PRO_0000069092" description="Alpha-2B adrenergic receptor">
    <location>
        <begin position="1" status="less than"/>
        <end position="391" status="greater than"/>
    </location>
</feature>
<feature type="transmembrane region" description="Helical; Name=1" evidence="1">
    <location>
        <begin position="1" status="less than"/>
        <end position="25"/>
    </location>
</feature>
<feature type="topological domain" description="Cytoplasmic" evidence="1">
    <location>
        <begin position="26"/>
        <end position="36"/>
    </location>
</feature>
<feature type="transmembrane region" description="Helical; Name=2" evidence="1">
    <location>
        <begin position="37"/>
        <end position="62"/>
    </location>
</feature>
<feature type="topological domain" description="Extracellular" evidence="1">
    <location>
        <begin position="63"/>
        <end position="72"/>
    </location>
</feature>
<feature type="transmembrane region" description="Helical; Name=3" evidence="1">
    <location>
        <begin position="73"/>
        <end position="95"/>
    </location>
</feature>
<feature type="topological domain" description="Cytoplasmic" evidence="1">
    <location>
        <begin position="96"/>
        <end position="117"/>
    </location>
</feature>
<feature type="transmembrane region" description="Helical; Name=4" evidence="1">
    <location>
        <begin position="118"/>
        <end position="140"/>
    </location>
</feature>
<feature type="topological domain" description="Extracellular" evidence="1">
    <location>
        <begin position="141"/>
        <end position="156"/>
    </location>
</feature>
<feature type="transmembrane region" description="Helical; Name=5" evidence="1">
    <location>
        <begin position="157"/>
        <end position="180"/>
    </location>
</feature>
<feature type="topological domain" description="Cytoplasmic" evidence="1">
    <location>
        <begin position="181"/>
        <end position="355"/>
    </location>
</feature>
<feature type="transmembrane region" description="Helical; Name=6" evidence="1">
    <location>
        <begin position="356"/>
        <end position="379"/>
    </location>
</feature>
<feature type="topological domain" description="Extracellular" evidence="1">
    <location>
        <begin position="380"/>
        <end position="388"/>
    </location>
</feature>
<feature type="transmembrane region" description="Helical; Name=7" evidence="1">
    <location>
        <begin position="389"/>
        <end position="391" status="greater than"/>
    </location>
</feature>
<feature type="region of interest" description="Disordered" evidence="4">
    <location>
        <begin position="194"/>
        <end position="218"/>
    </location>
</feature>
<feature type="region of interest" description="Disordered" evidence="4">
    <location>
        <begin position="233"/>
        <end position="312"/>
    </location>
</feature>
<feature type="compositionally biased region" description="Basic and acidic residues" evidence="4">
    <location>
        <begin position="233"/>
        <end position="247"/>
    </location>
</feature>
<feature type="compositionally biased region" description="Pro residues" evidence="4">
    <location>
        <begin position="256"/>
        <end position="266"/>
    </location>
</feature>
<feature type="compositionally biased region" description="Basic and acidic residues" evidence="4">
    <location>
        <begin position="271"/>
        <end position="281"/>
    </location>
</feature>
<feature type="compositionally biased region" description="Acidic residues" evidence="4">
    <location>
        <begin position="282"/>
        <end position="294"/>
    </location>
</feature>
<feature type="compositionally biased region" description="Low complexity" evidence="4">
    <location>
        <begin position="295"/>
        <end position="309"/>
    </location>
</feature>
<feature type="site" description="Implicated in ligand binding" evidence="1">
    <location>
        <position position="79"/>
    </location>
</feature>
<feature type="site" description="Implicated in catechol agonist binding" evidence="1">
    <location>
        <position position="163"/>
    </location>
</feature>
<feature type="site" description="Implicated in catechol agonist binding" evidence="1">
    <location>
        <position position="167"/>
    </location>
</feature>
<feature type="disulfide bond" evidence="3">
    <location>
        <begin position="72"/>
        <end position="151"/>
    </location>
</feature>
<feature type="non-terminal residue">
    <location>
        <position position="1"/>
    </location>
</feature>
<feature type="non-terminal residue">
    <location>
        <position position="391"/>
    </location>
</feature>
<organism>
    <name type="scientific">Erinaceus europaeus</name>
    <name type="common">Western European hedgehog</name>
    <dbReference type="NCBI Taxonomy" id="9365"/>
    <lineage>
        <taxon>Eukaryota</taxon>
        <taxon>Metazoa</taxon>
        <taxon>Chordata</taxon>
        <taxon>Craniata</taxon>
        <taxon>Vertebrata</taxon>
        <taxon>Euteleostomi</taxon>
        <taxon>Mammalia</taxon>
        <taxon>Eutheria</taxon>
        <taxon>Laurasiatheria</taxon>
        <taxon>Eulipotyphla</taxon>
        <taxon>Erinaceidae</taxon>
        <taxon>Erinaceinae</taxon>
        <taxon>Erinaceus</taxon>
    </lineage>
</organism>
<sequence length="391" mass="42920">AIAAVITFLILFTIFGNALVILAVLTSRSLRAPQNLFLVSLAAADILVATLIIPFSLANELLGYWYFRRTWCEVYLALDVLFCTSSIVHLCAISLDRYWAVSRALEYNSKRTPRRIKCIILTVWLIAAVISLPPLIYKGDQGPQPRGRPQCKLNQEAWYILASSIGSFFAPCLIMILVYLRIYLIAKRSHCRGPRAKGAPGKGESKQTGQASLGAPSSAKLPNLVSRLVAAREANRHSKSTGEKVEGETPEGPGTPGVPPSWPPLPSSGRGQEEDIYRASPEEEAGDDEEEECEPQAVPVSPASACSPPLQQPQGSRVLATLRGQVLLSRGVGTASGQWWRRRAQLTREKRFTFVLAVVIGVFVLCWFPFFFSYSLGAICPQHCKVPHGLF</sequence>